<proteinExistence type="inferred from homology"/>
<dbReference type="EMBL" id="AL596173">
    <property type="protein sequence ID" value="CAC97842.1"/>
    <property type="molecule type" value="Genomic_DNA"/>
</dbReference>
<dbReference type="PIR" id="AB1759">
    <property type="entry name" value="AB1759"/>
</dbReference>
<dbReference type="RefSeq" id="WP_003768282.1">
    <property type="nucleotide sequence ID" value="NC_003212.1"/>
</dbReference>
<dbReference type="SMR" id="Q928C1"/>
<dbReference type="STRING" id="272626.gene:17566996"/>
<dbReference type="GeneID" id="93235879"/>
<dbReference type="KEGG" id="lin:lin2615"/>
<dbReference type="eggNOG" id="COG1481">
    <property type="taxonomic scope" value="Bacteria"/>
</dbReference>
<dbReference type="HOGENOM" id="CLU_053282_0_0_9"/>
<dbReference type="OrthoDB" id="401278at2"/>
<dbReference type="Proteomes" id="UP000002513">
    <property type="component" value="Chromosome"/>
</dbReference>
<dbReference type="GO" id="GO:0003677">
    <property type="term" value="F:DNA binding"/>
    <property type="evidence" value="ECO:0007669"/>
    <property type="project" value="UniProtKB-UniRule"/>
</dbReference>
<dbReference type="GO" id="GO:0051301">
    <property type="term" value="P:cell division"/>
    <property type="evidence" value="ECO:0007669"/>
    <property type="project" value="UniProtKB-UniRule"/>
</dbReference>
<dbReference type="GO" id="GO:0043937">
    <property type="term" value="P:regulation of sporulation"/>
    <property type="evidence" value="ECO:0007669"/>
    <property type="project" value="InterPro"/>
</dbReference>
<dbReference type="FunFam" id="3.10.28.10:FF:000002">
    <property type="entry name" value="Probable cell division protein WhiA"/>
    <property type="match status" value="1"/>
</dbReference>
<dbReference type="Gene3D" id="3.10.28.10">
    <property type="entry name" value="Homing endonucleases"/>
    <property type="match status" value="1"/>
</dbReference>
<dbReference type="HAMAP" id="MF_01420">
    <property type="entry name" value="HTH_type_WhiA"/>
    <property type="match status" value="1"/>
</dbReference>
<dbReference type="InterPro" id="IPR027434">
    <property type="entry name" value="Homing_endonucl"/>
</dbReference>
<dbReference type="InterPro" id="IPR018478">
    <property type="entry name" value="Sporu_reg_WhiA_N_dom"/>
</dbReference>
<dbReference type="InterPro" id="IPR003802">
    <property type="entry name" value="Sporulation_regulator_WhiA"/>
</dbReference>
<dbReference type="InterPro" id="IPR023054">
    <property type="entry name" value="Sporulation_regulator_WhiA_C"/>
</dbReference>
<dbReference type="InterPro" id="IPR039518">
    <property type="entry name" value="WhiA_LAGLIDADG_dom"/>
</dbReference>
<dbReference type="NCBIfam" id="TIGR00647">
    <property type="entry name" value="DNA_bind_WhiA"/>
    <property type="match status" value="1"/>
</dbReference>
<dbReference type="PANTHER" id="PTHR37307">
    <property type="entry name" value="CELL DIVISION PROTEIN WHIA-RELATED"/>
    <property type="match status" value="1"/>
</dbReference>
<dbReference type="PANTHER" id="PTHR37307:SF1">
    <property type="entry name" value="CELL DIVISION PROTEIN WHIA-RELATED"/>
    <property type="match status" value="1"/>
</dbReference>
<dbReference type="Pfam" id="PF02650">
    <property type="entry name" value="HTH_WhiA"/>
    <property type="match status" value="1"/>
</dbReference>
<dbReference type="Pfam" id="PF14527">
    <property type="entry name" value="LAGLIDADG_WhiA"/>
    <property type="match status" value="1"/>
</dbReference>
<dbReference type="Pfam" id="PF10298">
    <property type="entry name" value="WhiA_N"/>
    <property type="match status" value="1"/>
</dbReference>
<dbReference type="SUPFAM" id="SSF55608">
    <property type="entry name" value="Homing endonucleases"/>
    <property type="match status" value="1"/>
</dbReference>
<reference key="1">
    <citation type="journal article" date="2001" name="Science">
        <title>Comparative genomics of Listeria species.</title>
        <authorList>
            <person name="Glaser P."/>
            <person name="Frangeul L."/>
            <person name="Buchrieser C."/>
            <person name="Rusniok C."/>
            <person name="Amend A."/>
            <person name="Baquero F."/>
            <person name="Berche P."/>
            <person name="Bloecker H."/>
            <person name="Brandt P."/>
            <person name="Chakraborty T."/>
            <person name="Charbit A."/>
            <person name="Chetouani F."/>
            <person name="Couve E."/>
            <person name="de Daruvar A."/>
            <person name="Dehoux P."/>
            <person name="Domann E."/>
            <person name="Dominguez-Bernal G."/>
            <person name="Duchaud E."/>
            <person name="Durant L."/>
            <person name="Dussurget O."/>
            <person name="Entian K.-D."/>
            <person name="Fsihi H."/>
            <person name="Garcia-del Portillo F."/>
            <person name="Garrido P."/>
            <person name="Gautier L."/>
            <person name="Goebel W."/>
            <person name="Gomez-Lopez N."/>
            <person name="Hain T."/>
            <person name="Hauf J."/>
            <person name="Jackson D."/>
            <person name="Jones L.-M."/>
            <person name="Kaerst U."/>
            <person name="Kreft J."/>
            <person name="Kuhn M."/>
            <person name="Kunst F."/>
            <person name="Kurapkat G."/>
            <person name="Madueno E."/>
            <person name="Maitournam A."/>
            <person name="Mata Vicente J."/>
            <person name="Ng E."/>
            <person name="Nedjari H."/>
            <person name="Nordsiek G."/>
            <person name="Novella S."/>
            <person name="de Pablos B."/>
            <person name="Perez-Diaz J.-C."/>
            <person name="Purcell R."/>
            <person name="Remmel B."/>
            <person name="Rose M."/>
            <person name="Schlueter T."/>
            <person name="Simoes N."/>
            <person name="Tierrez A."/>
            <person name="Vazquez-Boland J.-A."/>
            <person name="Voss H."/>
            <person name="Wehland J."/>
            <person name="Cossart P."/>
        </authorList>
    </citation>
    <scope>NUCLEOTIDE SEQUENCE [LARGE SCALE GENOMIC DNA]</scope>
    <source>
        <strain>ATCC BAA-680 / CLIP 11262</strain>
    </source>
</reference>
<organism>
    <name type="scientific">Listeria innocua serovar 6a (strain ATCC BAA-680 / CLIP 11262)</name>
    <dbReference type="NCBI Taxonomy" id="272626"/>
    <lineage>
        <taxon>Bacteria</taxon>
        <taxon>Bacillati</taxon>
        <taxon>Bacillota</taxon>
        <taxon>Bacilli</taxon>
        <taxon>Bacillales</taxon>
        <taxon>Listeriaceae</taxon>
        <taxon>Listeria</taxon>
    </lineage>
</organism>
<keyword id="KW-0131">Cell cycle</keyword>
<keyword id="KW-0132">Cell division</keyword>
<keyword id="KW-0238">DNA-binding</keyword>
<name>WHIA_LISIN</name>
<feature type="chain" id="PRO_0000376514" description="Probable cell division protein WhiA">
    <location>
        <begin position="1"/>
        <end position="323"/>
    </location>
</feature>
<feature type="DNA-binding region" description="H-T-H motif" evidence="1">
    <location>
        <begin position="275"/>
        <end position="309"/>
    </location>
</feature>
<accession>Q928C1</accession>
<gene>
    <name evidence="1" type="primary">whiA</name>
    <name type="ordered locus">lin2615</name>
</gene>
<sequence length="323" mass="36585">MSFASETKKELTHMDVSDSDAKVELAAFIRMNGAISFSNQLVIMDVQTENAAIARRMYQLLKDLYEVPIELLVRRKMKLKKNNVYIVRLKSGTRGILEDLRILEPPMTFTKSIDRGFVKKRSAKRAYLRGAFLASGSVNNPETSSYHLEIFSVYEEHNEAICALMNQFDLNARTLERKNGFITYLKEAEKITEFLSIIGATSALLHFEDVRIMRDMRNSVNRLVNCETANLNKTINAAVRQIDNIKYIQSTVGLEALPERLREIAALRIANEDVTLKELGEMLTTGQVSKSGINHRLRKLDQIAERLRSGETPAQVGLKVSNS</sequence>
<comment type="function">
    <text evidence="1">Involved in cell division and chromosome segregation.</text>
</comment>
<comment type="similarity">
    <text evidence="1">Belongs to the WhiA family.</text>
</comment>
<evidence type="ECO:0000255" key="1">
    <source>
        <dbReference type="HAMAP-Rule" id="MF_01420"/>
    </source>
</evidence>
<protein>
    <recommendedName>
        <fullName evidence="1">Probable cell division protein WhiA</fullName>
    </recommendedName>
</protein>